<name>CNOT4_MOUSE</name>
<accession>Q8BT14</accession>
<accession>Q8CCR4</accession>
<accession>Q9CV74</accession>
<accession>Q9Z1D0</accession>
<comment type="function">
    <text evidence="1">Has E3 ubiquitin ligase activity, promoting ubiquitination and degradation of target proteins. Involved in activation of the JAK/STAT pathway. Catalyzes ubiquitination of methylated RBM15. Plays a role in quality control of translation of mitochondrial outer membrane-localized mRNA. As part of the PINK1-regulated signaling, upon mitochondria damage, ubiquitinates ABCE1 and thereby recruits autophagy receptors to the mitochondrial outer membrane to initiate mitophagy.</text>
</comment>
<comment type="catalytic activity">
    <reaction evidence="1">
        <text>S-ubiquitinyl-[E2 ubiquitin-conjugating enzyme]-L-cysteine + [acceptor protein]-L-lysine = [E2 ubiquitin-conjugating enzyme]-L-cysteine + N(6)-ubiquitinyl-[acceptor protein]-L-lysine.</text>
        <dbReference type="EC" id="2.3.2.27"/>
    </reaction>
</comment>
<comment type="pathway">
    <text evidence="1">Protein modification; protein ubiquitination.</text>
</comment>
<comment type="subunit">
    <text evidence="1">Interacts with CNOT1 via its C-terminus but does not stably associate with the CCR4-NOT complex. Interacts (via RING domain) with UBE2D2. Interacts with ABCE1, PINK1 and PELO.</text>
</comment>
<comment type="subcellular location">
    <subcellularLocation>
        <location evidence="9">Cytoplasm</location>
    </subcellularLocation>
    <subcellularLocation>
        <location evidence="9">Nucleus</location>
    </subcellularLocation>
</comment>
<comment type="alternative products">
    <event type="alternative splicing"/>
    <isoform>
        <id>Q8BT14-1</id>
        <name>1</name>
        <sequence type="displayed"/>
    </isoform>
    <isoform>
        <id>Q8BT14-2</id>
        <name>2</name>
        <sequence type="described" ref="VSP_009930"/>
    </isoform>
    <isoform>
        <id>Q8BT14-3</id>
        <name>3</name>
        <sequence type="described" ref="VSP_009931"/>
    </isoform>
</comment>
<comment type="PTM">
    <text evidence="1">Autoubiquitinated.</text>
</comment>
<keyword id="KW-0002">3D-structure</keyword>
<keyword id="KW-0025">Alternative splicing</keyword>
<keyword id="KW-0175">Coiled coil</keyword>
<keyword id="KW-0963">Cytoplasm</keyword>
<keyword id="KW-0479">Metal-binding</keyword>
<keyword id="KW-0488">Methylation</keyword>
<keyword id="KW-0539">Nucleus</keyword>
<keyword id="KW-0597">Phosphoprotein</keyword>
<keyword id="KW-1185">Reference proteome</keyword>
<keyword id="KW-0694">RNA-binding</keyword>
<keyword id="KW-0804">Transcription</keyword>
<keyword id="KW-0805">Transcription regulation</keyword>
<keyword id="KW-0808">Transferase</keyword>
<keyword id="KW-0832">Ubl conjugation</keyword>
<keyword id="KW-0833">Ubl conjugation pathway</keyword>
<keyword id="KW-0862">Zinc</keyword>
<keyword id="KW-0863">Zinc-finger</keyword>
<organism>
    <name type="scientific">Mus musculus</name>
    <name type="common">Mouse</name>
    <dbReference type="NCBI Taxonomy" id="10090"/>
    <lineage>
        <taxon>Eukaryota</taxon>
        <taxon>Metazoa</taxon>
        <taxon>Chordata</taxon>
        <taxon>Craniata</taxon>
        <taxon>Vertebrata</taxon>
        <taxon>Euteleostomi</taxon>
        <taxon>Mammalia</taxon>
        <taxon>Eutheria</taxon>
        <taxon>Euarchontoglires</taxon>
        <taxon>Glires</taxon>
        <taxon>Rodentia</taxon>
        <taxon>Myomorpha</taxon>
        <taxon>Muroidea</taxon>
        <taxon>Muridae</taxon>
        <taxon>Murinae</taxon>
        <taxon>Mus</taxon>
        <taxon>Mus</taxon>
    </lineage>
</organism>
<feature type="chain" id="PRO_0000081680" description="CCR4-NOT transcription complex subunit 4">
    <location>
        <begin position="1"/>
        <end position="575"/>
    </location>
</feature>
<feature type="domain" description="RRM" evidence="4">
    <location>
        <begin position="109"/>
        <end position="189"/>
    </location>
</feature>
<feature type="zinc finger region" description="RING-type; degenerate" evidence="3">
    <location>
        <begin position="14"/>
        <end position="57"/>
    </location>
</feature>
<feature type="zinc finger region" description="C3H1-type" evidence="5">
    <location>
        <begin position="190"/>
        <end position="217"/>
    </location>
</feature>
<feature type="region of interest" description="Disordered" evidence="6">
    <location>
        <begin position="256"/>
        <end position="370"/>
    </location>
</feature>
<feature type="region of interest" description="Disordered" evidence="6">
    <location>
        <begin position="424"/>
        <end position="459"/>
    </location>
</feature>
<feature type="region of interest" description="Disordered" evidence="6">
    <location>
        <begin position="553"/>
        <end position="575"/>
    </location>
</feature>
<feature type="coiled-coil region" evidence="2">
    <location>
        <begin position="68"/>
        <end position="104"/>
    </location>
</feature>
<feature type="compositionally biased region" description="Polar residues" evidence="6">
    <location>
        <begin position="281"/>
        <end position="299"/>
    </location>
</feature>
<feature type="compositionally biased region" description="Polar residues" evidence="6">
    <location>
        <begin position="307"/>
        <end position="322"/>
    </location>
</feature>
<feature type="compositionally biased region" description="Pro residues" evidence="6">
    <location>
        <begin position="345"/>
        <end position="358"/>
    </location>
</feature>
<feature type="compositionally biased region" description="Polar residues" evidence="6">
    <location>
        <begin position="425"/>
        <end position="446"/>
    </location>
</feature>
<feature type="modified residue" description="Phosphoserine" evidence="10">
    <location>
        <position position="71"/>
    </location>
</feature>
<feature type="modified residue" description="Phosphoserine" evidence="1">
    <location>
        <position position="301"/>
    </location>
</feature>
<feature type="modified residue" description="Phosphoserine" evidence="11">
    <location>
        <position position="324"/>
    </location>
</feature>
<feature type="modified residue" description="Phosphoserine" evidence="1">
    <location>
        <position position="432"/>
    </location>
</feature>
<feature type="modified residue" description="Asymmetric dimethylarginine" evidence="12">
    <location>
        <position position="475"/>
    </location>
</feature>
<feature type="modified residue" description="Asymmetric dimethylarginine" evidence="1">
    <location>
        <position position="483"/>
    </location>
</feature>
<feature type="modified residue" description="Asymmetric dimethylarginine" evidence="12">
    <location>
        <position position="497"/>
    </location>
</feature>
<feature type="splice variant" id="VSP_009930" description="In isoform 2." evidence="8">
    <original>RYDT</original>
    <variation>S</variation>
    <location>
        <begin position="271"/>
        <end position="274"/>
    </location>
</feature>
<feature type="splice variant" id="VSP_009931" description="In isoform 3." evidence="7">
    <original>GEEEVKVSTMPLSASSHSLQQGQQPTSLHTTVA</original>
    <variation>DNNSSVESLNMKEWQDGLRALLPNININFGGLPNSSSPSNANHSAPTSNTATTDSVSWDSPGSWTDPAIITGIPASSGNTLDSIQDDNPPHWLKSLQALTEMDGPSAASSQPHHSAPFSTQIPLHRASWNPYPPPSNPSSFHSPPPGFQTAFRPPSKTPTDLLQSSTLDRH</variation>
    <location>
        <begin position="543"/>
        <end position="575"/>
    </location>
</feature>
<feature type="sequence conflict" description="In Ref. 2; BAC25801." evidence="9" ref="2">
    <original>E</original>
    <variation>Q</variation>
    <location>
        <position position="167"/>
    </location>
</feature>
<feature type="sequence conflict" description="In Ref. 2; BAC25801." evidence="9" ref="2">
    <original>N</original>
    <variation>H</variation>
    <location>
        <position position="177"/>
    </location>
</feature>
<feature type="sequence conflict" description="In Ref. 2; BAC25801." evidence="9" ref="2">
    <original>K</original>
    <variation>Q</variation>
    <location>
        <position position="207"/>
    </location>
</feature>
<feature type="sequence conflict" description="In Ref. 2; BAC27779." evidence="9" ref="2">
    <original>D</original>
    <variation>Y</variation>
    <location>
        <position position="417"/>
    </location>
</feature>
<feature type="strand" evidence="13">
    <location>
        <begin position="111"/>
        <end position="116"/>
    </location>
</feature>
<feature type="turn" evidence="13">
    <location>
        <begin position="118"/>
        <end position="120"/>
    </location>
</feature>
<feature type="helix" evidence="13">
    <location>
        <begin position="123"/>
        <end position="127"/>
    </location>
</feature>
<feature type="turn" evidence="13">
    <location>
        <begin position="129"/>
        <end position="135"/>
    </location>
</feature>
<feature type="strand" evidence="13">
    <location>
        <begin position="138"/>
        <end position="144"/>
    </location>
</feature>
<feature type="strand" evidence="13">
    <location>
        <begin position="151"/>
        <end position="153"/>
    </location>
</feature>
<feature type="strand" evidence="13">
    <location>
        <begin position="157"/>
        <end position="165"/>
    </location>
</feature>
<feature type="helix" evidence="13">
    <location>
        <begin position="166"/>
        <end position="176"/>
    </location>
</feature>
<feature type="strand" evidence="13">
    <location>
        <begin position="179"/>
        <end position="181"/>
    </location>
</feature>
<feature type="strand" evidence="13">
    <location>
        <begin position="184"/>
        <end position="190"/>
    </location>
</feature>
<feature type="modified residue" description="Phosphothreonine" evidence="11">
    <location sequence="Q8BT14-2">
        <position position="296"/>
    </location>
</feature>
<feature type="modified residue" description="Phosphoserine" evidence="11">
    <location sequence="Q8BT14-2">
        <position position="298"/>
    </location>
</feature>
<feature type="modified residue" description="Phosphoserine" evidence="11">
    <location sequence="Q8BT14-2">
        <position position="304"/>
    </location>
</feature>
<protein>
    <recommendedName>
        <fullName>CCR4-NOT transcription complex subunit 4</fullName>
        <ecNumber evidence="1">2.3.2.27</ecNumber>
    </recommendedName>
    <alternativeName>
        <fullName>CCR4-associated factor 4</fullName>
    </alternativeName>
    <alternativeName>
        <fullName>E3 ubiquitin-protein ligase CNOT4</fullName>
    </alternativeName>
    <alternativeName>
        <fullName>Potential transcriptional repressor NOT4Hp</fullName>
    </alternativeName>
    <alternativeName>
        <fullName evidence="9">RING-type E3 ubiquitin transferase CNOT4</fullName>
    </alternativeName>
</protein>
<reference key="1">
    <citation type="submission" date="1996-09" db="EMBL/GenBank/DDBJ databases">
        <title>Isolation and characterization of human and murine homologues of yeast NOT4 gene.</title>
        <authorList>
            <person name="Chiang P.-W."/>
        </authorList>
    </citation>
    <scope>NUCLEOTIDE SEQUENCE [MRNA] (ISOFORM 1)</scope>
</reference>
<reference key="2">
    <citation type="journal article" date="2005" name="Science">
        <title>The transcriptional landscape of the mammalian genome.</title>
        <authorList>
            <person name="Carninci P."/>
            <person name="Kasukawa T."/>
            <person name="Katayama S."/>
            <person name="Gough J."/>
            <person name="Frith M.C."/>
            <person name="Maeda N."/>
            <person name="Oyama R."/>
            <person name="Ravasi T."/>
            <person name="Lenhard B."/>
            <person name="Wells C."/>
            <person name="Kodzius R."/>
            <person name="Shimokawa K."/>
            <person name="Bajic V.B."/>
            <person name="Brenner S.E."/>
            <person name="Batalov S."/>
            <person name="Forrest A.R."/>
            <person name="Zavolan M."/>
            <person name="Davis M.J."/>
            <person name="Wilming L.G."/>
            <person name="Aidinis V."/>
            <person name="Allen J.E."/>
            <person name="Ambesi-Impiombato A."/>
            <person name="Apweiler R."/>
            <person name="Aturaliya R.N."/>
            <person name="Bailey T.L."/>
            <person name="Bansal M."/>
            <person name="Baxter L."/>
            <person name="Beisel K.W."/>
            <person name="Bersano T."/>
            <person name="Bono H."/>
            <person name="Chalk A.M."/>
            <person name="Chiu K.P."/>
            <person name="Choudhary V."/>
            <person name="Christoffels A."/>
            <person name="Clutterbuck D.R."/>
            <person name="Crowe M.L."/>
            <person name="Dalla E."/>
            <person name="Dalrymple B.P."/>
            <person name="de Bono B."/>
            <person name="Della Gatta G."/>
            <person name="di Bernardo D."/>
            <person name="Down T."/>
            <person name="Engstrom P."/>
            <person name="Fagiolini M."/>
            <person name="Faulkner G."/>
            <person name="Fletcher C.F."/>
            <person name="Fukushima T."/>
            <person name="Furuno M."/>
            <person name="Futaki S."/>
            <person name="Gariboldi M."/>
            <person name="Georgii-Hemming P."/>
            <person name="Gingeras T.R."/>
            <person name="Gojobori T."/>
            <person name="Green R.E."/>
            <person name="Gustincich S."/>
            <person name="Harbers M."/>
            <person name="Hayashi Y."/>
            <person name="Hensch T.K."/>
            <person name="Hirokawa N."/>
            <person name="Hill D."/>
            <person name="Huminiecki L."/>
            <person name="Iacono M."/>
            <person name="Ikeo K."/>
            <person name="Iwama A."/>
            <person name="Ishikawa T."/>
            <person name="Jakt M."/>
            <person name="Kanapin A."/>
            <person name="Katoh M."/>
            <person name="Kawasawa Y."/>
            <person name="Kelso J."/>
            <person name="Kitamura H."/>
            <person name="Kitano H."/>
            <person name="Kollias G."/>
            <person name="Krishnan S.P."/>
            <person name="Kruger A."/>
            <person name="Kummerfeld S.K."/>
            <person name="Kurochkin I.V."/>
            <person name="Lareau L.F."/>
            <person name="Lazarevic D."/>
            <person name="Lipovich L."/>
            <person name="Liu J."/>
            <person name="Liuni S."/>
            <person name="McWilliam S."/>
            <person name="Madan Babu M."/>
            <person name="Madera M."/>
            <person name="Marchionni L."/>
            <person name="Matsuda H."/>
            <person name="Matsuzawa S."/>
            <person name="Miki H."/>
            <person name="Mignone F."/>
            <person name="Miyake S."/>
            <person name="Morris K."/>
            <person name="Mottagui-Tabar S."/>
            <person name="Mulder N."/>
            <person name="Nakano N."/>
            <person name="Nakauchi H."/>
            <person name="Ng P."/>
            <person name="Nilsson R."/>
            <person name="Nishiguchi S."/>
            <person name="Nishikawa S."/>
            <person name="Nori F."/>
            <person name="Ohara O."/>
            <person name="Okazaki Y."/>
            <person name="Orlando V."/>
            <person name="Pang K.C."/>
            <person name="Pavan W.J."/>
            <person name="Pavesi G."/>
            <person name="Pesole G."/>
            <person name="Petrovsky N."/>
            <person name="Piazza S."/>
            <person name="Reed J."/>
            <person name="Reid J.F."/>
            <person name="Ring B.Z."/>
            <person name="Ringwald M."/>
            <person name="Rost B."/>
            <person name="Ruan Y."/>
            <person name="Salzberg S.L."/>
            <person name="Sandelin A."/>
            <person name="Schneider C."/>
            <person name="Schoenbach C."/>
            <person name="Sekiguchi K."/>
            <person name="Semple C.A."/>
            <person name="Seno S."/>
            <person name="Sessa L."/>
            <person name="Sheng Y."/>
            <person name="Shibata Y."/>
            <person name="Shimada H."/>
            <person name="Shimada K."/>
            <person name="Silva D."/>
            <person name="Sinclair B."/>
            <person name="Sperling S."/>
            <person name="Stupka E."/>
            <person name="Sugiura K."/>
            <person name="Sultana R."/>
            <person name="Takenaka Y."/>
            <person name="Taki K."/>
            <person name="Tammoja K."/>
            <person name="Tan S.L."/>
            <person name="Tang S."/>
            <person name="Taylor M.S."/>
            <person name="Tegner J."/>
            <person name="Teichmann S.A."/>
            <person name="Ueda H.R."/>
            <person name="van Nimwegen E."/>
            <person name="Verardo R."/>
            <person name="Wei C.L."/>
            <person name="Yagi K."/>
            <person name="Yamanishi H."/>
            <person name="Zabarovsky E."/>
            <person name="Zhu S."/>
            <person name="Zimmer A."/>
            <person name="Hide W."/>
            <person name="Bult C."/>
            <person name="Grimmond S.M."/>
            <person name="Teasdale R.D."/>
            <person name="Liu E.T."/>
            <person name="Brusic V."/>
            <person name="Quackenbush J."/>
            <person name="Wahlestedt C."/>
            <person name="Mattick J.S."/>
            <person name="Hume D.A."/>
            <person name="Kai C."/>
            <person name="Sasaki D."/>
            <person name="Tomaru Y."/>
            <person name="Fukuda S."/>
            <person name="Kanamori-Katayama M."/>
            <person name="Suzuki M."/>
            <person name="Aoki J."/>
            <person name="Arakawa T."/>
            <person name="Iida J."/>
            <person name="Imamura K."/>
            <person name="Itoh M."/>
            <person name="Kato T."/>
            <person name="Kawaji H."/>
            <person name="Kawagashira N."/>
            <person name="Kawashima T."/>
            <person name="Kojima M."/>
            <person name="Kondo S."/>
            <person name="Konno H."/>
            <person name="Nakano K."/>
            <person name="Ninomiya N."/>
            <person name="Nishio T."/>
            <person name="Okada M."/>
            <person name="Plessy C."/>
            <person name="Shibata K."/>
            <person name="Shiraki T."/>
            <person name="Suzuki S."/>
            <person name="Tagami M."/>
            <person name="Waki K."/>
            <person name="Watahiki A."/>
            <person name="Okamura-Oho Y."/>
            <person name="Suzuki H."/>
            <person name="Kawai J."/>
            <person name="Hayashizaki Y."/>
        </authorList>
    </citation>
    <scope>NUCLEOTIDE SEQUENCE [LARGE SCALE MRNA] (ISOFORMS 1 AND 2)</scope>
    <source>
        <strain>C57BL/6J</strain>
        <tissue>Olfactory bulb</tissue>
        <tissue>Tongue</tissue>
    </source>
</reference>
<reference key="3">
    <citation type="journal article" date="2004" name="Genome Res.">
        <title>The status, quality, and expansion of the NIH full-length cDNA project: the Mammalian Gene Collection (MGC).</title>
        <authorList>
            <consortium name="The MGC Project Team"/>
        </authorList>
    </citation>
    <scope>NUCLEOTIDE SEQUENCE [LARGE SCALE MRNA] (ISOFORM 3)</scope>
    <source>
        <strain>FVB/N</strain>
        <tissue>Mammary gland</tissue>
    </source>
</reference>
<reference key="4">
    <citation type="journal article" date="2007" name="Science">
        <title>ATM and ATR substrate analysis reveals extensive protein networks responsive to DNA damage.</title>
        <authorList>
            <person name="Matsuoka S."/>
            <person name="Ballif B.A."/>
            <person name="Smogorzewska A."/>
            <person name="McDonald E.R. III"/>
            <person name="Hurov K.E."/>
            <person name="Luo J."/>
            <person name="Bakalarski C.E."/>
            <person name="Zhao Z."/>
            <person name="Solimini N."/>
            <person name="Lerenthal Y."/>
            <person name="Shiloh Y."/>
            <person name="Gygi S.P."/>
            <person name="Elledge S.J."/>
        </authorList>
    </citation>
    <scope>PHOSPHORYLATION [LARGE SCALE ANALYSIS] AT SER-71</scope>
    <scope>IDENTIFICATION BY MASS SPECTROMETRY [LARGE SCALE ANALYSIS]</scope>
    <source>
        <tissue>Embryonic fibroblast</tissue>
    </source>
</reference>
<reference key="5">
    <citation type="journal article" date="2009" name="Immunity">
        <title>The phagosomal proteome in interferon-gamma-activated macrophages.</title>
        <authorList>
            <person name="Trost M."/>
            <person name="English L."/>
            <person name="Lemieux S."/>
            <person name="Courcelles M."/>
            <person name="Desjardins M."/>
            <person name="Thibault P."/>
        </authorList>
    </citation>
    <scope>IDENTIFICATION BY MASS SPECTROMETRY [LARGE SCALE ANALYSIS]</scope>
</reference>
<reference key="6">
    <citation type="journal article" date="2010" name="Cell">
        <title>A tissue-specific atlas of mouse protein phosphorylation and expression.</title>
        <authorList>
            <person name="Huttlin E.L."/>
            <person name="Jedrychowski M.P."/>
            <person name="Elias J.E."/>
            <person name="Goswami T."/>
            <person name="Rad R."/>
            <person name="Beausoleil S.A."/>
            <person name="Villen J."/>
            <person name="Haas W."/>
            <person name="Sowa M.E."/>
            <person name="Gygi S.P."/>
        </authorList>
    </citation>
    <scope>PHOSPHORYLATION [LARGE SCALE ANALYSIS] AT SER-324</scope>
    <scope>PHOSPHORYLATION [LARGE SCALE ANALYSIS] AT THR-296; SER-298 AND SER-304 (ISOFORM 2)</scope>
    <scope>IDENTIFICATION BY MASS SPECTROMETRY [LARGE SCALE ANALYSIS]</scope>
    <source>
        <tissue>Kidney</tissue>
        <tissue>Lung</tissue>
        <tissue>Spleen</tissue>
        <tissue>Testis</tissue>
    </source>
</reference>
<reference key="7">
    <citation type="journal article" date="2014" name="Mol. Cell. Proteomics">
        <title>Immunoaffinity enrichment and mass spectrometry analysis of protein methylation.</title>
        <authorList>
            <person name="Guo A."/>
            <person name="Gu H."/>
            <person name="Zhou J."/>
            <person name="Mulhern D."/>
            <person name="Wang Y."/>
            <person name="Lee K.A."/>
            <person name="Yang V."/>
            <person name="Aguiar M."/>
            <person name="Kornhauser J."/>
            <person name="Jia X."/>
            <person name="Ren J."/>
            <person name="Beausoleil S.A."/>
            <person name="Silva J.C."/>
            <person name="Vemulapalli V."/>
            <person name="Bedford M.T."/>
            <person name="Comb M.J."/>
        </authorList>
    </citation>
    <scope>METHYLATION [LARGE SCALE ANALYSIS] AT ARG-475 AND ARG-497</scope>
    <scope>IDENTIFICATION BY MASS SPECTROMETRY [LARGE SCALE ANALYSIS]</scope>
    <source>
        <tissue>Brain</tissue>
        <tissue>Embryo</tissue>
    </source>
</reference>
<reference key="8">
    <citation type="submission" date="2005-11" db="PDB data bank">
        <title>Solution structure of the RNA recognition motif of CNOT4.</title>
        <authorList>
            <consortium name="RIKEN structural genomics initiative (RSGI)"/>
        </authorList>
    </citation>
    <scope>STRUCTURE BY NMR OF 101-198</scope>
</reference>
<sequence length="575" mass="63474">MSRSPDAKEDPVECPLCMEPLEIDDINFFPCTCGYQICRFCWHRIRTDENGLCPACRKPYPEDPAVYKPLSQEELQRIKNEKKQKQNERKQKISENRKHLASVRVVQKNLVFVVGLSQRLADPEVLKRPEYFGKFGKIHKVVINNSTSYAGSQGPSASAYVTYIRSEDALRAIQCVNNVVVDGRTLKASLGTTKYCSYFLKNMQCPKPDCMYLHELGDEAASFTKEEMQAGKHQEYEQKLLQELYKLNPNFLQLSTGSVDKNKNKVTPLQRYDTPIDKPSDSLSIGNGDNSQQISNSDTPSPPPGLSKSNPVIPISSSNHSARSPFEGAVTESQSLFSDNFRHPNPIPSGLPPFPSSPQTPSDWPTAPEPQSLFTSETIPVSSSTDWQAAFGFGSSKQPEDDLGFDPFDVTRKALADLIEKELSVQDQPSLSPTSLQNASSHTTTAKGPGSGFLHSAAPTNANSLNSTFSVLPQRFPQFQQHRAVYNSFGFPGQAARYPWMAFPRNSIMHLNHTANPTSNSNFLDLNLPPQHNTGLGGIPIAGEEEVKVSTMPLSASSHSLQQGQQPTSLHTTVA</sequence>
<dbReference type="EC" id="2.3.2.27" evidence="1"/>
<dbReference type="EMBL" id="U71269">
    <property type="protein sequence ID" value="AAD00181.1"/>
    <property type="molecule type" value="mRNA"/>
</dbReference>
<dbReference type="EMBL" id="AK009234">
    <property type="protein sequence ID" value="BAB26155.1"/>
    <property type="molecule type" value="mRNA"/>
</dbReference>
<dbReference type="EMBL" id="AK028190">
    <property type="protein sequence ID" value="BAC25801.1"/>
    <property type="molecule type" value="mRNA"/>
</dbReference>
<dbReference type="EMBL" id="AK032248">
    <property type="protein sequence ID" value="BAC27779.1"/>
    <property type="molecule type" value="mRNA"/>
</dbReference>
<dbReference type="EMBL" id="BC058778">
    <property type="protein sequence ID" value="AAH58778.1"/>
    <property type="molecule type" value="mRNA"/>
</dbReference>
<dbReference type="CCDS" id="CCDS19999.1">
    <molecule id="Q8BT14-1"/>
</dbReference>
<dbReference type="CCDS" id="CCDS80520.1">
    <molecule id="Q8BT14-2"/>
</dbReference>
<dbReference type="RefSeq" id="NP_001157883.1">
    <molecule id="Q8BT14-2"/>
    <property type="nucleotide sequence ID" value="NM_001164411.2"/>
</dbReference>
<dbReference type="RefSeq" id="NP_001157885.1">
    <property type="nucleotide sequence ID" value="NM_001164413.1"/>
</dbReference>
<dbReference type="RefSeq" id="NP_001397611.1">
    <molecule id="Q8BT14-1"/>
    <property type="nucleotide sequence ID" value="NM_001410682.1"/>
</dbReference>
<dbReference type="RefSeq" id="NP_001397612.1">
    <molecule id="Q8BT14-2"/>
    <property type="nucleotide sequence ID" value="NM_001410683.1"/>
</dbReference>
<dbReference type="RefSeq" id="NP_001397613.1">
    <molecule id="Q8BT14-3"/>
    <property type="nucleotide sequence ID" value="NM_001410684.1"/>
</dbReference>
<dbReference type="RefSeq" id="NP_001397614.1">
    <molecule id="Q8BT14-3"/>
    <property type="nucleotide sequence ID" value="NM_001410685.1"/>
</dbReference>
<dbReference type="RefSeq" id="NP_058573.3">
    <molecule id="Q8BT14-1"/>
    <property type="nucleotide sequence ID" value="NM_016877.4"/>
</dbReference>
<dbReference type="RefSeq" id="XP_011239709.1">
    <property type="nucleotide sequence ID" value="XM_011241407.1"/>
</dbReference>
<dbReference type="RefSeq" id="XP_011239710.1">
    <property type="nucleotide sequence ID" value="XM_011241408.2"/>
</dbReference>
<dbReference type="PDB" id="2CPI">
    <property type="method" value="NMR"/>
    <property type="chains" value="A=101-198"/>
</dbReference>
<dbReference type="PDBsum" id="2CPI"/>
<dbReference type="BMRB" id="Q8BT14"/>
<dbReference type="SMR" id="Q8BT14"/>
<dbReference type="BioGRID" id="207338">
    <property type="interactions" value="1"/>
</dbReference>
<dbReference type="FunCoup" id="Q8BT14">
    <property type="interactions" value="1531"/>
</dbReference>
<dbReference type="IntAct" id="Q8BT14">
    <property type="interactions" value="2"/>
</dbReference>
<dbReference type="STRING" id="10090.ENSMUSP00000110645"/>
<dbReference type="GlyGen" id="Q8BT14">
    <property type="glycosylation" value="5 sites, 1 O-linked glycan (5 sites)"/>
</dbReference>
<dbReference type="iPTMnet" id="Q8BT14"/>
<dbReference type="PhosphoSitePlus" id="Q8BT14"/>
<dbReference type="SwissPalm" id="Q8BT14"/>
<dbReference type="jPOST" id="Q8BT14"/>
<dbReference type="PaxDb" id="10090-ENSMUSP00000110645"/>
<dbReference type="ProteomicsDB" id="283651">
    <molecule id="Q8BT14-1"/>
</dbReference>
<dbReference type="ProteomicsDB" id="283652">
    <molecule id="Q8BT14-2"/>
</dbReference>
<dbReference type="ProteomicsDB" id="283653">
    <molecule id="Q8BT14-3"/>
</dbReference>
<dbReference type="Pumba" id="Q8BT14"/>
<dbReference type="Antibodypedia" id="1419">
    <property type="antibodies" value="641 antibodies from 38 providers"/>
</dbReference>
<dbReference type="DNASU" id="53621"/>
<dbReference type="Ensembl" id="ENSMUST00000044163.10">
    <molecule id="Q8BT14-1"/>
    <property type="protein sequence ID" value="ENSMUSP00000044137.7"/>
    <property type="gene ID" value="ENSMUSG00000038784.14"/>
</dbReference>
<dbReference type="Ensembl" id="ENSMUST00000202417.2">
    <molecule id="Q8BT14-2"/>
    <property type="protein sequence ID" value="ENSMUSP00000144409.2"/>
    <property type="gene ID" value="ENSMUSG00000038784.14"/>
</dbReference>
<dbReference type="GeneID" id="53621"/>
<dbReference type="KEGG" id="mmu:53621"/>
<dbReference type="UCSC" id="uc009bid.2">
    <molecule id="Q8BT14-3"/>
    <property type="organism name" value="mouse"/>
</dbReference>
<dbReference type="UCSC" id="uc009big.2">
    <molecule id="Q8BT14-1"/>
    <property type="organism name" value="mouse"/>
</dbReference>
<dbReference type="AGR" id="MGI:1859026"/>
<dbReference type="CTD" id="4850"/>
<dbReference type="MGI" id="MGI:1859026">
    <property type="gene designation" value="Cnot4"/>
</dbReference>
<dbReference type="VEuPathDB" id="HostDB:ENSMUSG00000038784"/>
<dbReference type="eggNOG" id="KOG2068">
    <property type="taxonomic scope" value="Eukaryota"/>
</dbReference>
<dbReference type="GeneTree" id="ENSGT00390000000068"/>
<dbReference type="InParanoid" id="Q8BT14"/>
<dbReference type="PhylomeDB" id="Q8BT14"/>
<dbReference type="TreeFam" id="TF106134"/>
<dbReference type="Reactome" id="R-MMU-429947">
    <property type="pathway name" value="Deadenylation of mRNA"/>
</dbReference>
<dbReference type="Reactome" id="R-MMU-6804115">
    <property type="pathway name" value="TP53 regulates transcription of additional cell cycle genes whose exact role in the p53 pathway remain uncertain"/>
</dbReference>
<dbReference type="UniPathway" id="UPA00143"/>
<dbReference type="BioGRID-ORCS" id="53621">
    <property type="hits" value="12 hits in 81 CRISPR screens"/>
</dbReference>
<dbReference type="ChiTaRS" id="Cnot4">
    <property type="organism name" value="mouse"/>
</dbReference>
<dbReference type="EvolutionaryTrace" id="Q8BT14"/>
<dbReference type="PRO" id="PR:Q8BT14"/>
<dbReference type="Proteomes" id="UP000000589">
    <property type="component" value="Chromosome 6"/>
</dbReference>
<dbReference type="RNAct" id="Q8BT14">
    <property type="molecule type" value="protein"/>
</dbReference>
<dbReference type="Bgee" id="ENSMUSG00000038784">
    <property type="expression patterns" value="Expressed in floor plate of midbrain and 258 other cell types or tissues"/>
</dbReference>
<dbReference type="ExpressionAtlas" id="Q8BT14">
    <property type="expression patterns" value="baseline and differential"/>
</dbReference>
<dbReference type="GO" id="GO:0030014">
    <property type="term" value="C:CCR4-NOT complex"/>
    <property type="evidence" value="ECO:0007669"/>
    <property type="project" value="InterPro"/>
</dbReference>
<dbReference type="GO" id="GO:0005829">
    <property type="term" value="C:cytosol"/>
    <property type="evidence" value="ECO:0000304"/>
    <property type="project" value="Reactome"/>
</dbReference>
<dbReference type="GO" id="GO:0005634">
    <property type="term" value="C:nucleus"/>
    <property type="evidence" value="ECO:0007669"/>
    <property type="project" value="UniProtKB-SubCell"/>
</dbReference>
<dbReference type="GO" id="GO:0003723">
    <property type="term" value="F:RNA binding"/>
    <property type="evidence" value="ECO:0007669"/>
    <property type="project" value="UniProtKB-KW"/>
</dbReference>
<dbReference type="GO" id="GO:0004842">
    <property type="term" value="F:ubiquitin-protein transferase activity"/>
    <property type="evidence" value="ECO:0000250"/>
    <property type="project" value="UniProtKB"/>
</dbReference>
<dbReference type="GO" id="GO:0008270">
    <property type="term" value="F:zinc ion binding"/>
    <property type="evidence" value="ECO:0007669"/>
    <property type="project" value="UniProtKB-KW"/>
</dbReference>
<dbReference type="GO" id="GO:0051865">
    <property type="term" value="P:protein autoubiquitination"/>
    <property type="evidence" value="ECO:0000250"/>
    <property type="project" value="UniProtKB"/>
</dbReference>
<dbReference type="GO" id="GO:0045652">
    <property type="term" value="P:regulation of megakaryocyte differentiation"/>
    <property type="evidence" value="ECO:0000250"/>
    <property type="project" value="UniProtKB"/>
</dbReference>
<dbReference type="GO" id="GO:0006511">
    <property type="term" value="P:ubiquitin-dependent protein catabolic process"/>
    <property type="evidence" value="ECO:0000250"/>
    <property type="project" value="UniProtKB"/>
</dbReference>
<dbReference type="CDD" id="cd16618">
    <property type="entry name" value="mRING-HC-C4C4_CNOT4"/>
    <property type="match status" value="1"/>
</dbReference>
<dbReference type="CDD" id="cd12438">
    <property type="entry name" value="RRM_CNOT4"/>
    <property type="match status" value="1"/>
</dbReference>
<dbReference type="FunFam" id="3.30.40.10:FF:000006">
    <property type="entry name" value="CCR4-NOT transcription complex subunit 4"/>
    <property type="match status" value="1"/>
</dbReference>
<dbReference type="FunFam" id="3.30.70.330:FF:000044">
    <property type="entry name" value="Putative ccr4-not transcription complex subunit 4"/>
    <property type="match status" value="1"/>
</dbReference>
<dbReference type="Gene3D" id="3.30.70.330">
    <property type="match status" value="1"/>
</dbReference>
<dbReference type="Gene3D" id="3.30.40.10">
    <property type="entry name" value="Zinc/RING finger domain, C3HC4 (zinc finger)"/>
    <property type="match status" value="1"/>
</dbReference>
<dbReference type="InterPro" id="IPR034261">
    <property type="entry name" value="CNOT4_RRM"/>
</dbReference>
<dbReference type="InterPro" id="IPR039780">
    <property type="entry name" value="Mot2"/>
</dbReference>
<dbReference type="InterPro" id="IPR039515">
    <property type="entry name" value="NOT4_mRING-HC-C4C4"/>
</dbReference>
<dbReference type="InterPro" id="IPR012677">
    <property type="entry name" value="Nucleotide-bd_a/b_plait_sf"/>
</dbReference>
<dbReference type="InterPro" id="IPR035979">
    <property type="entry name" value="RBD_domain_sf"/>
</dbReference>
<dbReference type="InterPro" id="IPR000504">
    <property type="entry name" value="RRM_dom"/>
</dbReference>
<dbReference type="InterPro" id="IPR003954">
    <property type="entry name" value="RRM_dom_euk"/>
</dbReference>
<dbReference type="InterPro" id="IPR000571">
    <property type="entry name" value="Znf_CCCH"/>
</dbReference>
<dbReference type="InterPro" id="IPR001841">
    <property type="entry name" value="Znf_RING"/>
</dbReference>
<dbReference type="InterPro" id="IPR013083">
    <property type="entry name" value="Znf_RING/FYVE/PHD"/>
</dbReference>
<dbReference type="PANTHER" id="PTHR12603">
    <property type="entry name" value="CCR4-NOT TRANSCRIPTION COMPLEX RELATED"/>
    <property type="match status" value="1"/>
</dbReference>
<dbReference type="PANTHER" id="PTHR12603:SF0">
    <property type="entry name" value="CCR4-NOT TRANSCRIPTION COMPLEX SUBUNIT 4"/>
    <property type="match status" value="1"/>
</dbReference>
<dbReference type="Pfam" id="PF00076">
    <property type="entry name" value="RRM_1"/>
    <property type="match status" value="1"/>
</dbReference>
<dbReference type="Pfam" id="PF14570">
    <property type="entry name" value="zf-RING_4"/>
    <property type="match status" value="1"/>
</dbReference>
<dbReference type="SMART" id="SM00361">
    <property type="entry name" value="RRM_1"/>
    <property type="match status" value="1"/>
</dbReference>
<dbReference type="SUPFAM" id="SSF57850">
    <property type="entry name" value="RING/U-box"/>
    <property type="match status" value="1"/>
</dbReference>
<dbReference type="SUPFAM" id="SSF54928">
    <property type="entry name" value="RNA-binding domain, RBD"/>
    <property type="match status" value="1"/>
</dbReference>
<dbReference type="PROSITE" id="PS50102">
    <property type="entry name" value="RRM"/>
    <property type="match status" value="1"/>
</dbReference>
<dbReference type="PROSITE" id="PS50103">
    <property type="entry name" value="ZF_C3H1"/>
    <property type="match status" value="1"/>
</dbReference>
<dbReference type="PROSITE" id="PS50089">
    <property type="entry name" value="ZF_RING_2"/>
    <property type="match status" value="1"/>
</dbReference>
<proteinExistence type="evidence at protein level"/>
<evidence type="ECO:0000250" key="1">
    <source>
        <dbReference type="UniProtKB" id="O95628"/>
    </source>
</evidence>
<evidence type="ECO:0000255" key="2"/>
<evidence type="ECO:0000255" key="3">
    <source>
        <dbReference type="PROSITE-ProRule" id="PRU00175"/>
    </source>
</evidence>
<evidence type="ECO:0000255" key="4">
    <source>
        <dbReference type="PROSITE-ProRule" id="PRU00176"/>
    </source>
</evidence>
<evidence type="ECO:0000255" key="5">
    <source>
        <dbReference type="PROSITE-ProRule" id="PRU00723"/>
    </source>
</evidence>
<evidence type="ECO:0000256" key="6">
    <source>
        <dbReference type="SAM" id="MobiDB-lite"/>
    </source>
</evidence>
<evidence type="ECO:0000303" key="7">
    <source>
    </source>
</evidence>
<evidence type="ECO:0000303" key="8">
    <source>
    </source>
</evidence>
<evidence type="ECO:0000305" key="9"/>
<evidence type="ECO:0007744" key="10">
    <source>
    </source>
</evidence>
<evidence type="ECO:0007744" key="11">
    <source>
    </source>
</evidence>
<evidence type="ECO:0007744" key="12">
    <source>
    </source>
</evidence>
<evidence type="ECO:0007829" key="13">
    <source>
        <dbReference type="PDB" id="2CPI"/>
    </source>
</evidence>
<gene>
    <name type="primary">Cnot4</name>
    <name type="synonym">Not4</name>
</gene>